<name>GRDA_ALKMQ</name>
<evidence type="ECO:0000255" key="1">
    <source>
        <dbReference type="HAMAP-Rule" id="MF_00826"/>
    </source>
</evidence>
<evidence type="ECO:0000305" key="2"/>
<protein>
    <recommendedName>
        <fullName evidence="1">Glycine/sarcosine/betaine reductase complex component A</fullName>
        <ecNumber evidence="1">1.21.4.2</ecNumber>
        <ecNumber evidence="1">1.21.4.3</ecNumber>
        <ecNumber evidence="1">1.21.4.4</ecNumber>
    </recommendedName>
    <alternativeName>
        <fullName evidence="1">Selenoprotein PA</fullName>
    </alternativeName>
    <alternativeName>
        <fullName evidence="1">Thioredoxin reductase complex selenoprotein A</fullName>
    </alternativeName>
</protein>
<organism>
    <name type="scientific">Alkaliphilus metalliredigens (strain QYMF)</name>
    <dbReference type="NCBI Taxonomy" id="293826"/>
    <lineage>
        <taxon>Bacteria</taxon>
        <taxon>Bacillati</taxon>
        <taxon>Bacillota</taxon>
        <taxon>Clostridia</taxon>
        <taxon>Peptostreptococcales</taxon>
        <taxon>Natronincolaceae</taxon>
        <taxon>Alkaliphilus</taxon>
    </lineage>
</organism>
<keyword id="KW-0560">Oxidoreductase</keyword>
<keyword id="KW-1185">Reference proteome</keyword>
<keyword id="KW-0712">Selenocysteine</keyword>
<dbReference type="EC" id="1.21.4.2" evidence="1"/>
<dbReference type="EC" id="1.21.4.3" evidence="1"/>
<dbReference type="EC" id="1.21.4.4" evidence="1"/>
<dbReference type="EMBL" id="CP000724">
    <property type="protein sequence ID" value="ABR49714.1"/>
    <property type="molecule type" value="Genomic_DNA"/>
</dbReference>
<dbReference type="RefSeq" id="WP_012064674.1">
    <property type="nucleotide sequence ID" value="NC_009633.1"/>
</dbReference>
<dbReference type="STRING" id="293826.Amet_3592"/>
<dbReference type="KEGG" id="amt:Amet_3592"/>
<dbReference type="eggNOG" id="ENOG50313TT">
    <property type="taxonomic scope" value="Bacteria"/>
</dbReference>
<dbReference type="HOGENOM" id="CLU_142275_0_0_9"/>
<dbReference type="OrthoDB" id="9787487at2"/>
<dbReference type="Proteomes" id="UP000001572">
    <property type="component" value="Chromosome"/>
</dbReference>
<dbReference type="GO" id="GO:0030700">
    <property type="term" value="C:glycine reductase complex"/>
    <property type="evidence" value="ECO:0007669"/>
    <property type="project" value="InterPro"/>
</dbReference>
<dbReference type="GO" id="GO:0033795">
    <property type="term" value="F:betaine reductase activity"/>
    <property type="evidence" value="ECO:0007669"/>
    <property type="project" value="UniProtKB-EC"/>
</dbReference>
<dbReference type="GO" id="GO:0030699">
    <property type="term" value="F:glycine reductase activity"/>
    <property type="evidence" value="ECO:0007669"/>
    <property type="project" value="UniProtKB-UniRule"/>
</dbReference>
<dbReference type="GO" id="GO:0033794">
    <property type="term" value="F:sarcosine reductase activity"/>
    <property type="evidence" value="ECO:0007669"/>
    <property type="project" value="UniProtKB-EC"/>
</dbReference>
<dbReference type="HAMAP" id="MF_00826">
    <property type="entry name" value="GRDA"/>
    <property type="match status" value="1"/>
</dbReference>
<dbReference type="InterPro" id="IPR006812">
    <property type="entry name" value="GRDA"/>
</dbReference>
<dbReference type="NCBIfam" id="NF040748">
    <property type="entry name" value="reduct_selen_A"/>
    <property type="match status" value="1"/>
</dbReference>
<dbReference type="Pfam" id="PF04723">
    <property type="entry name" value="GRDA"/>
    <property type="match status" value="1"/>
</dbReference>
<dbReference type="PIRSF" id="PIRSF000181">
    <property type="entry name" value="Grc_selenoprot_A"/>
    <property type="match status" value="1"/>
</dbReference>
<proteinExistence type="inferred from homology"/>
<accession>A6TU46</accession>
<gene>
    <name evidence="1" type="primary">grdA</name>
    <name type="ordered locus">Amet_3592</name>
</gene>
<feature type="chain" id="PRO_1000062704" description="Glycine/sarcosine/betaine reductase complex component A">
    <location>
        <begin position="1"/>
        <end position="158"/>
    </location>
</feature>
<feature type="active site" evidence="1">
    <location>
        <position position="44"/>
    </location>
</feature>
<feature type="non-standard amino acid" description="Selenocysteine" evidence="2">
    <location>
        <position position="44"/>
    </location>
</feature>
<sequence>MSLFDGKKVIIIGDRDGIPGPAMEECLKGTGAEVVYSSTECFVUTAAGAMDLENQKRVMDLTEKHNAENVVVILGAAEAEAAGLAAETVTNGDPTFAGPLAGVQLGLRVYHAVEPQFKDAVNAEVYEDQIGMMEMVLEVDAIIEEMSNIRNEFGKFKD</sequence>
<reference key="1">
    <citation type="journal article" date="2016" name="Genome Announc.">
        <title>Complete genome sequence of Alkaliphilus metalliredigens strain QYMF, an alkaliphilic and metal-reducing bacterium isolated from borax-contaminated leachate ponds.</title>
        <authorList>
            <person name="Hwang C."/>
            <person name="Copeland A."/>
            <person name="Lucas S."/>
            <person name="Lapidus A."/>
            <person name="Barry K."/>
            <person name="Detter J.C."/>
            <person name="Glavina Del Rio T."/>
            <person name="Hammon N."/>
            <person name="Israni S."/>
            <person name="Dalin E."/>
            <person name="Tice H."/>
            <person name="Pitluck S."/>
            <person name="Chertkov O."/>
            <person name="Brettin T."/>
            <person name="Bruce D."/>
            <person name="Han C."/>
            <person name="Schmutz J."/>
            <person name="Larimer F."/>
            <person name="Land M.L."/>
            <person name="Hauser L."/>
            <person name="Kyrpides N."/>
            <person name="Mikhailova N."/>
            <person name="Ye Q."/>
            <person name="Zhou J."/>
            <person name="Richardson P."/>
            <person name="Fields M.W."/>
        </authorList>
    </citation>
    <scope>NUCLEOTIDE SEQUENCE [LARGE SCALE GENOMIC DNA]</scope>
    <source>
        <strain>QYMF</strain>
    </source>
</reference>
<comment type="function">
    <text evidence="1">In the first step of glycine, betaine and sarcosine reductases, the substrate is bound to component PB via a Schiff base intermediate. Then the PB-activated substrate is nucleophilically attacked by the selenol anion of component PA to transform it to a carboxymethylated selenoether and the respective amine. By action of component PC, acetyl phosphate is formed, leaving component PA in its oxidized state. Finally component PA becomes reduced by the thioredoxin system to start a new catalytic cycle of reductive deamination.</text>
</comment>
<comment type="catalytic activity">
    <reaction evidence="1">
        <text>acetyl phosphate + [thioredoxin]-disulfide + NH4(+) + H2O = [thioredoxin]-dithiol + glycine + phosphate + H(+)</text>
        <dbReference type="Rhea" id="RHEA:12232"/>
        <dbReference type="Rhea" id="RHEA-COMP:10698"/>
        <dbReference type="Rhea" id="RHEA-COMP:10700"/>
        <dbReference type="ChEBI" id="CHEBI:15377"/>
        <dbReference type="ChEBI" id="CHEBI:15378"/>
        <dbReference type="ChEBI" id="CHEBI:22191"/>
        <dbReference type="ChEBI" id="CHEBI:28938"/>
        <dbReference type="ChEBI" id="CHEBI:29950"/>
        <dbReference type="ChEBI" id="CHEBI:43474"/>
        <dbReference type="ChEBI" id="CHEBI:50058"/>
        <dbReference type="ChEBI" id="CHEBI:57305"/>
        <dbReference type="EC" id="1.21.4.2"/>
    </reaction>
</comment>
<comment type="catalytic activity">
    <reaction evidence="1">
        <text>acetyl phosphate + methylamine + [thioredoxin]-disulfide + H2O = sarcosine + [thioredoxin]-dithiol + phosphate + H(+)</text>
        <dbReference type="Rhea" id="RHEA:12825"/>
        <dbReference type="Rhea" id="RHEA-COMP:10698"/>
        <dbReference type="Rhea" id="RHEA-COMP:10700"/>
        <dbReference type="ChEBI" id="CHEBI:15377"/>
        <dbReference type="ChEBI" id="CHEBI:15378"/>
        <dbReference type="ChEBI" id="CHEBI:22191"/>
        <dbReference type="ChEBI" id="CHEBI:29950"/>
        <dbReference type="ChEBI" id="CHEBI:43474"/>
        <dbReference type="ChEBI" id="CHEBI:50058"/>
        <dbReference type="ChEBI" id="CHEBI:57433"/>
        <dbReference type="ChEBI" id="CHEBI:59338"/>
        <dbReference type="EC" id="1.21.4.3"/>
    </reaction>
</comment>
<comment type="catalytic activity">
    <reaction evidence="1">
        <text>acetyl phosphate + trimethylamine + [thioredoxin]-disulfide + H2O = glycine betaine + [thioredoxin]-dithiol + phosphate + H(+)</text>
        <dbReference type="Rhea" id="RHEA:11848"/>
        <dbReference type="Rhea" id="RHEA-COMP:10698"/>
        <dbReference type="Rhea" id="RHEA-COMP:10700"/>
        <dbReference type="ChEBI" id="CHEBI:15377"/>
        <dbReference type="ChEBI" id="CHEBI:15378"/>
        <dbReference type="ChEBI" id="CHEBI:17750"/>
        <dbReference type="ChEBI" id="CHEBI:22191"/>
        <dbReference type="ChEBI" id="CHEBI:29950"/>
        <dbReference type="ChEBI" id="CHEBI:43474"/>
        <dbReference type="ChEBI" id="CHEBI:50058"/>
        <dbReference type="ChEBI" id="CHEBI:58389"/>
        <dbReference type="EC" id="1.21.4.4"/>
    </reaction>
</comment>
<comment type="subunit">
    <text evidence="1">Monomer. Component of the glycine, sarcosine and betaine reductase complexes, together with components B and C.</text>
</comment>
<comment type="similarity">
    <text evidence="1">Belongs to the GrdA family.</text>
</comment>